<protein>
    <recommendedName>
        <fullName evidence="1">Sulfate adenylyltransferase subunit 2</fullName>
        <ecNumber evidence="1">2.7.7.4</ecNumber>
    </recommendedName>
    <alternativeName>
        <fullName evidence="1">ATP-sulfurylase small subunit</fullName>
    </alternativeName>
    <alternativeName>
        <fullName evidence="1">Sulfate adenylate transferase</fullName>
        <shortName evidence="1">SAT</shortName>
    </alternativeName>
</protein>
<proteinExistence type="inferred from homology"/>
<feature type="chain" id="PRO_1000092228" description="Sulfate adenylyltransferase subunit 2">
    <location>
        <begin position="1"/>
        <end position="303"/>
    </location>
</feature>
<organism>
    <name type="scientific">Sulfurovum sp. (strain NBC37-1)</name>
    <dbReference type="NCBI Taxonomy" id="387093"/>
    <lineage>
        <taxon>Bacteria</taxon>
        <taxon>Pseudomonadati</taxon>
        <taxon>Campylobacterota</taxon>
        <taxon>Epsilonproteobacteria</taxon>
        <taxon>Campylobacterales</taxon>
        <taxon>Sulfurovaceae</taxon>
        <taxon>Sulfurovum</taxon>
    </lineage>
</organism>
<comment type="function">
    <text evidence="1">With CysN forms the ATP sulfurylase (ATPS) that catalyzes the adenylation of sulfate producing adenosine 5'-phosphosulfate (APS) and diphosphate, the first enzymatic step in sulfur assimilation pathway. APS synthesis involves the formation of a high-energy phosphoric-sulfuric acid anhydride bond driven by GTP hydrolysis by CysN coupled to ATP hydrolysis by CysD.</text>
</comment>
<comment type="catalytic activity">
    <reaction evidence="1">
        <text>sulfate + ATP + H(+) = adenosine 5'-phosphosulfate + diphosphate</text>
        <dbReference type="Rhea" id="RHEA:18133"/>
        <dbReference type="ChEBI" id="CHEBI:15378"/>
        <dbReference type="ChEBI" id="CHEBI:16189"/>
        <dbReference type="ChEBI" id="CHEBI:30616"/>
        <dbReference type="ChEBI" id="CHEBI:33019"/>
        <dbReference type="ChEBI" id="CHEBI:58243"/>
        <dbReference type="EC" id="2.7.7.4"/>
    </reaction>
</comment>
<comment type="pathway">
    <text evidence="1">Sulfur metabolism; hydrogen sulfide biosynthesis; sulfite from sulfate: step 1/3.</text>
</comment>
<comment type="subunit">
    <text evidence="1">Heterodimer composed of CysD, the smaller subunit, and CysN.</text>
</comment>
<comment type="similarity">
    <text evidence="1">Belongs to the PAPS reductase family. CysD subfamily.</text>
</comment>
<reference key="1">
    <citation type="journal article" date="2007" name="Proc. Natl. Acad. Sci. U.S.A.">
        <title>Deep-sea vent epsilon-proteobacterial genomes provide insights into emergence of pathogens.</title>
        <authorList>
            <person name="Nakagawa S."/>
            <person name="Takaki Y."/>
            <person name="Shimamura S."/>
            <person name="Reysenbach A.-L."/>
            <person name="Takai K."/>
            <person name="Horikoshi K."/>
        </authorList>
    </citation>
    <scope>NUCLEOTIDE SEQUENCE [LARGE SCALE GENOMIC DNA]</scope>
    <source>
        <strain>NBC37-1</strain>
    </source>
</reference>
<sequence length="303" mass="35051">MINRERLTHLKQLEAESIHILREVVAEFANPVMMYSVGKDSSVMLHLAMKAFAPSKLPFPLLHVDTKWKFKEMIEFRDQRAKDLGFDLVVYSNPEGEKMNISPFEHGSKVHTDVMKTQGLKQALNAGGYDAVIGGARRDEEKSRAKERIFSFRDKHHRWDPKNQRPELWNIYNTAIQKGESVRVFPISNWTELDVWQYIYLEGIPIPSLYFAKEREVVEYEGTKIMVDDDRMPETLRSTAQKEMVRFRTLGCYPLTGAINSSATTLPEIIKEMLLSTSSEREGRLIDKDQEGAMELKKIEGYF</sequence>
<gene>
    <name evidence="1" type="primary">cysD</name>
    <name type="ordered locus">SUN_1722</name>
</gene>
<name>CYSD_SULNB</name>
<keyword id="KW-0067">ATP-binding</keyword>
<keyword id="KW-0547">Nucleotide-binding</keyword>
<keyword id="KW-0548">Nucleotidyltransferase</keyword>
<keyword id="KW-0808">Transferase</keyword>
<dbReference type="EC" id="2.7.7.4" evidence="1"/>
<dbReference type="EMBL" id="AP009179">
    <property type="protein sequence ID" value="BAF72672.1"/>
    <property type="molecule type" value="Genomic_DNA"/>
</dbReference>
<dbReference type="RefSeq" id="WP_012083482.1">
    <property type="nucleotide sequence ID" value="NC_009663.1"/>
</dbReference>
<dbReference type="SMR" id="A6QB13"/>
<dbReference type="STRING" id="387093.SUN_1722"/>
<dbReference type="KEGG" id="sun:SUN_1722"/>
<dbReference type="eggNOG" id="COG0175">
    <property type="taxonomic scope" value="Bacteria"/>
</dbReference>
<dbReference type="HOGENOM" id="CLU_043026_0_0_7"/>
<dbReference type="OrthoDB" id="9772604at2"/>
<dbReference type="UniPathway" id="UPA00140">
    <property type="reaction ID" value="UER00204"/>
</dbReference>
<dbReference type="Proteomes" id="UP000006378">
    <property type="component" value="Chromosome"/>
</dbReference>
<dbReference type="GO" id="GO:0005524">
    <property type="term" value="F:ATP binding"/>
    <property type="evidence" value="ECO:0007669"/>
    <property type="project" value="UniProtKB-KW"/>
</dbReference>
<dbReference type="GO" id="GO:0004781">
    <property type="term" value="F:sulfate adenylyltransferase (ATP) activity"/>
    <property type="evidence" value="ECO:0007669"/>
    <property type="project" value="UniProtKB-UniRule"/>
</dbReference>
<dbReference type="GO" id="GO:0070814">
    <property type="term" value="P:hydrogen sulfide biosynthetic process"/>
    <property type="evidence" value="ECO:0007669"/>
    <property type="project" value="UniProtKB-UniRule"/>
</dbReference>
<dbReference type="GO" id="GO:0000103">
    <property type="term" value="P:sulfate assimilation"/>
    <property type="evidence" value="ECO:0007669"/>
    <property type="project" value="UniProtKB-UniRule"/>
</dbReference>
<dbReference type="CDD" id="cd23946">
    <property type="entry name" value="Sulfate_adenylyltransferase_2"/>
    <property type="match status" value="1"/>
</dbReference>
<dbReference type="FunFam" id="3.40.50.620:FF:000002">
    <property type="entry name" value="Sulfate adenylyltransferase subunit 2"/>
    <property type="match status" value="1"/>
</dbReference>
<dbReference type="Gene3D" id="3.40.50.620">
    <property type="entry name" value="HUPs"/>
    <property type="match status" value="1"/>
</dbReference>
<dbReference type="HAMAP" id="MF_00064">
    <property type="entry name" value="Sulf_adenylyltr_sub2"/>
    <property type="match status" value="1"/>
</dbReference>
<dbReference type="InterPro" id="IPR002500">
    <property type="entry name" value="PAPS_reduct_dom"/>
</dbReference>
<dbReference type="InterPro" id="IPR014729">
    <property type="entry name" value="Rossmann-like_a/b/a_fold"/>
</dbReference>
<dbReference type="InterPro" id="IPR011784">
    <property type="entry name" value="SO4_adenylTrfase_ssu"/>
</dbReference>
<dbReference type="InterPro" id="IPR050128">
    <property type="entry name" value="Sulfate_adenylyltrnsfr_sub2"/>
</dbReference>
<dbReference type="NCBIfam" id="TIGR02039">
    <property type="entry name" value="CysD"/>
    <property type="match status" value="1"/>
</dbReference>
<dbReference type="NCBIfam" id="NF003587">
    <property type="entry name" value="PRK05253.1"/>
    <property type="match status" value="1"/>
</dbReference>
<dbReference type="NCBIfam" id="NF009214">
    <property type="entry name" value="PRK12563.1"/>
    <property type="match status" value="1"/>
</dbReference>
<dbReference type="PANTHER" id="PTHR43196">
    <property type="entry name" value="SULFATE ADENYLYLTRANSFERASE SUBUNIT 2"/>
    <property type="match status" value="1"/>
</dbReference>
<dbReference type="PANTHER" id="PTHR43196:SF1">
    <property type="entry name" value="SULFATE ADENYLYLTRANSFERASE SUBUNIT 2"/>
    <property type="match status" value="1"/>
</dbReference>
<dbReference type="Pfam" id="PF01507">
    <property type="entry name" value="PAPS_reduct"/>
    <property type="match status" value="1"/>
</dbReference>
<dbReference type="PIRSF" id="PIRSF002936">
    <property type="entry name" value="CysDAde_trans"/>
    <property type="match status" value="1"/>
</dbReference>
<dbReference type="SUPFAM" id="SSF52402">
    <property type="entry name" value="Adenine nucleotide alpha hydrolases-like"/>
    <property type="match status" value="1"/>
</dbReference>
<evidence type="ECO:0000255" key="1">
    <source>
        <dbReference type="HAMAP-Rule" id="MF_00064"/>
    </source>
</evidence>
<accession>A6QB13</accession>